<keyword id="KW-0963">Cytoplasm</keyword>
<keyword id="KW-0274">FAD</keyword>
<keyword id="KW-0285">Flavoprotein</keyword>
<keyword id="KW-0520">NAD</keyword>
<keyword id="KW-1185">Reference proteome</keyword>
<keyword id="KW-0819">tRNA processing</keyword>
<reference key="1">
    <citation type="journal article" date="2008" name="BMC Genomics">
        <title>Genomics of an extreme psychrophile, Psychromonas ingrahamii.</title>
        <authorList>
            <person name="Riley M."/>
            <person name="Staley J.T."/>
            <person name="Danchin A."/>
            <person name="Wang T.Z."/>
            <person name="Brettin T.S."/>
            <person name="Hauser L.J."/>
            <person name="Land M.L."/>
            <person name="Thompson L.S."/>
        </authorList>
    </citation>
    <scope>NUCLEOTIDE SEQUENCE [LARGE SCALE GENOMIC DNA]</scope>
    <source>
        <strain>DSM 17664 / CCUG 51855 / 37</strain>
    </source>
</reference>
<protein>
    <recommendedName>
        <fullName evidence="1">tRNA uridine 5-carboxymethylaminomethyl modification enzyme MnmG</fullName>
    </recommendedName>
    <alternativeName>
        <fullName evidence="1">Glucose-inhibited division protein A</fullName>
    </alternativeName>
</protein>
<name>MNMG_PSYIN</name>
<gene>
    <name evidence="1" type="primary">mnmG</name>
    <name evidence="1" type="synonym">gidA</name>
    <name type="ordered locus">Ping_3741</name>
</gene>
<dbReference type="EMBL" id="CP000510">
    <property type="protein sequence ID" value="ABM05415.1"/>
    <property type="molecule type" value="Genomic_DNA"/>
</dbReference>
<dbReference type="RefSeq" id="WP_011771963.1">
    <property type="nucleotide sequence ID" value="NC_008709.1"/>
</dbReference>
<dbReference type="SMR" id="A1T100"/>
<dbReference type="STRING" id="357804.Ping_3741"/>
<dbReference type="KEGG" id="pin:Ping_3741"/>
<dbReference type="eggNOG" id="COG0445">
    <property type="taxonomic scope" value="Bacteria"/>
</dbReference>
<dbReference type="HOGENOM" id="CLU_007831_2_2_6"/>
<dbReference type="OrthoDB" id="9815560at2"/>
<dbReference type="Proteomes" id="UP000000639">
    <property type="component" value="Chromosome"/>
</dbReference>
<dbReference type="GO" id="GO:0005829">
    <property type="term" value="C:cytosol"/>
    <property type="evidence" value="ECO:0007669"/>
    <property type="project" value="TreeGrafter"/>
</dbReference>
<dbReference type="GO" id="GO:0050660">
    <property type="term" value="F:flavin adenine dinucleotide binding"/>
    <property type="evidence" value="ECO:0007669"/>
    <property type="project" value="UniProtKB-UniRule"/>
</dbReference>
<dbReference type="GO" id="GO:0030488">
    <property type="term" value="P:tRNA methylation"/>
    <property type="evidence" value="ECO:0007669"/>
    <property type="project" value="TreeGrafter"/>
</dbReference>
<dbReference type="GO" id="GO:0002098">
    <property type="term" value="P:tRNA wobble uridine modification"/>
    <property type="evidence" value="ECO:0007669"/>
    <property type="project" value="InterPro"/>
</dbReference>
<dbReference type="FunFam" id="1.10.10.1800:FF:000001">
    <property type="entry name" value="tRNA uridine 5-carboxymethylaminomethyl modification enzyme MnmG"/>
    <property type="match status" value="1"/>
</dbReference>
<dbReference type="FunFam" id="1.10.150.570:FF:000001">
    <property type="entry name" value="tRNA uridine 5-carboxymethylaminomethyl modification enzyme MnmG"/>
    <property type="match status" value="1"/>
</dbReference>
<dbReference type="FunFam" id="3.50.50.60:FF:000002">
    <property type="entry name" value="tRNA uridine 5-carboxymethylaminomethyl modification enzyme MnmG"/>
    <property type="match status" value="1"/>
</dbReference>
<dbReference type="FunFam" id="3.50.50.60:FF:000010">
    <property type="entry name" value="tRNA uridine 5-carboxymethylaminomethyl modification enzyme MnmG"/>
    <property type="match status" value="1"/>
</dbReference>
<dbReference type="Gene3D" id="3.50.50.60">
    <property type="entry name" value="FAD/NAD(P)-binding domain"/>
    <property type="match status" value="2"/>
</dbReference>
<dbReference type="Gene3D" id="1.10.150.570">
    <property type="entry name" value="GidA associated domain, C-terminal subdomain"/>
    <property type="match status" value="1"/>
</dbReference>
<dbReference type="Gene3D" id="1.10.10.1800">
    <property type="entry name" value="tRNA uridine 5-carboxymethylaminomethyl modification enzyme MnmG/GidA"/>
    <property type="match status" value="1"/>
</dbReference>
<dbReference type="HAMAP" id="MF_00129">
    <property type="entry name" value="MnmG_GidA"/>
    <property type="match status" value="1"/>
</dbReference>
<dbReference type="InterPro" id="IPR036188">
    <property type="entry name" value="FAD/NAD-bd_sf"/>
</dbReference>
<dbReference type="InterPro" id="IPR049312">
    <property type="entry name" value="GIDA_C_N"/>
</dbReference>
<dbReference type="InterPro" id="IPR004416">
    <property type="entry name" value="MnmG"/>
</dbReference>
<dbReference type="InterPro" id="IPR002218">
    <property type="entry name" value="MnmG-rel"/>
</dbReference>
<dbReference type="InterPro" id="IPR020595">
    <property type="entry name" value="MnmG-rel_CS"/>
</dbReference>
<dbReference type="InterPro" id="IPR026904">
    <property type="entry name" value="MnmG_C"/>
</dbReference>
<dbReference type="InterPro" id="IPR047001">
    <property type="entry name" value="MnmG_C_subdom"/>
</dbReference>
<dbReference type="InterPro" id="IPR044920">
    <property type="entry name" value="MnmG_C_subdom_sf"/>
</dbReference>
<dbReference type="InterPro" id="IPR040131">
    <property type="entry name" value="MnmG_N"/>
</dbReference>
<dbReference type="NCBIfam" id="TIGR00136">
    <property type="entry name" value="mnmG_gidA"/>
    <property type="match status" value="1"/>
</dbReference>
<dbReference type="PANTHER" id="PTHR11806">
    <property type="entry name" value="GLUCOSE INHIBITED DIVISION PROTEIN A"/>
    <property type="match status" value="1"/>
</dbReference>
<dbReference type="PANTHER" id="PTHR11806:SF0">
    <property type="entry name" value="PROTEIN MTO1 HOMOLOG, MITOCHONDRIAL"/>
    <property type="match status" value="1"/>
</dbReference>
<dbReference type="Pfam" id="PF01134">
    <property type="entry name" value="GIDA"/>
    <property type="match status" value="1"/>
</dbReference>
<dbReference type="Pfam" id="PF21680">
    <property type="entry name" value="GIDA_C_1st"/>
    <property type="match status" value="1"/>
</dbReference>
<dbReference type="Pfam" id="PF13932">
    <property type="entry name" value="SAM_GIDA_C"/>
    <property type="match status" value="1"/>
</dbReference>
<dbReference type="SMART" id="SM01228">
    <property type="entry name" value="GIDA_assoc_3"/>
    <property type="match status" value="1"/>
</dbReference>
<dbReference type="SUPFAM" id="SSF51905">
    <property type="entry name" value="FAD/NAD(P)-binding domain"/>
    <property type="match status" value="1"/>
</dbReference>
<dbReference type="PROSITE" id="PS01280">
    <property type="entry name" value="GIDA_1"/>
    <property type="match status" value="1"/>
</dbReference>
<dbReference type="PROSITE" id="PS01281">
    <property type="entry name" value="GIDA_2"/>
    <property type="match status" value="1"/>
</dbReference>
<accession>A1T100</accession>
<organism>
    <name type="scientific">Psychromonas ingrahamii (strain DSM 17664 / CCUG 51855 / 37)</name>
    <dbReference type="NCBI Taxonomy" id="357804"/>
    <lineage>
        <taxon>Bacteria</taxon>
        <taxon>Pseudomonadati</taxon>
        <taxon>Pseudomonadota</taxon>
        <taxon>Gammaproteobacteria</taxon>
        <taxon>Alteromonadales</taxon>
        <taxon>Psychromonadaceae</taxon>
        <taxon>Psychromonas</taxon>
    </lineage>
</organism>
<feature type="chain" id="PRO_1000016653" description="tRNA uridine 5-carboxymethylaminomethyl modification enzyme MnmG">
    <location>
        <begin position="1"/>
        <end position="629"/>
    </location>
</feature>
<feature type="binding site" evidence="1">
    <location>
        <begin position="13"/>
        <end position="18"/>
    </location>
    <ligand>
        <name>FAD</name>
        <dbReference type="ChEBI" id="CHEBI:57692"/>
    </ligand>
</feature>
<feature type="binding site" evidence="1">
    <location>
        <position position="125"/>
    </location>
    <ligand>
        <name>FAD</name>
        <dbReference type="ChEBI" id="CHEBI:57692"/>
    </ligand>
</feature>
<feature type="binding site" evidence="1">
    <location>
        <position position="180"/>
    </location>
    <ligand>
        <name>FAD</name>
        <dbReference type="ChEBI" id="CHEBI:57692"/>
    </ligand>
</feature>
<feature type="binding site" evidence="1">
    <location>
        <begin position="273"/>
        <end position="287"/>
    </location>
    <ligand>
        <name>NAD(+)</name>
        <dbReference type="ChEBI" id="CHEBI:57540"/>
    </ligand>
</feature>
<feature type="binding site" evidence="1">
    <location>
        <position position="370"/>
    </location>
    <ligand>
        <name>FAD</name>
        <dbReference type="ChEBI" id="CHEBI:57692"/>
    </ligand>
</feature>
<evidence type="ECO:0000255" key="1">
    <source>
        <dbReference type="HAMAP-Rule" id="MF_00129"/>
    </source>
</evidence>
<comment type="function">
    <text evidence="1">NAD-binding protein involved in the addition of a carboxymethylaminomethyl (cmnm) group at the wobble position (U34) of certain tRNAs, forming tRNA-cmnm(5)s(2)U34.</text>
</comment>
<comment type="cofactor">
    <cofactor evidence="1">
        <name>FAD</name>
        <dbReference type="ChEBI" id="CHEBI:57692"/>
    </cofactor>
</comment>
<comment type="subunit">
    <text evidence="1">Homodimer. Heterotetramer of two MnmE and two MnmG subunits.</text>
</comment>
<comment type="subcellular location">
    <subcellularLocation>
        <location evidence="1">Cytoplasm</location>
    </subcellularLocation>
</comment>
<comment type="similarity">
    <text evidence="1">Belongs to the MnmG family.</text>
</comment>
<sequence length="629" mass="69868">MNYHEHFDVIVIGGGHAGTEAAAAAARMGMNTLLLTHNIETLGQMSCNPAIGGIGKGHLVREIDALGGLMANAADKAGIQFRILNGSKGPAVRATRAQADRLLYKAAIREKLENQENLKIFQQEVEDLVVENDRVSGVVTKMGIKFSAKTVVLTVGTFLNGQIHVGLKNHSGGRAGDSASIGLAQRLRELPLRTGRLKTGTPARIDSRSIDFSALEVQHGDNPTPVFSFLGDRSEHPRQIPCYITHTNEKTHDIIRRNLDRSPMYSGVIEGVGPRYCPSIEDKVMRFADKNSHQIFVEPEGLTTNEIYPNGISTSLPFDVQIDFIRSMKGFENAFVTRPGYAIEYDYFDPRDLKSTLESKYIDGLFFAGQINGTTGYEEAAAQGLLAGMNAGLMVQDKEGWCPGRDQAYAGVLVDDLSTLGTKEPYRMFTSRAEYRLLLREDNADTRLTEKGRELGLVDDIRWKAFSMKQESVETEIQRLKNQWIHPKSENASQINALLKTPMQRESTLEGMIRRPEVNYQSLISIEGLGPVLENVQAAEQVEIIIKYQGYVDRQREEIEKLKRNEDTLLPIHLDYSDIKGLSNEVTAKLNDTKPENIGQASRISGITPAAISILLIYIKKNALRRKVL</sequence>
<proteinExistence type="inferred from homology"/>